<organism>
    <name type="scientific">Shewanella oneidensis (strain ATCC 700550 / JCM 31522 / CIP 106686 / LMG 19005 / NCIMB 14063 / MR-1)</name>
    <dbReference type="NCBI Taxonomy" id="211586"/>
    <lineage>
        <taxon>Bacteria</taxon>
        <taxon>Pseudomonadati</taxon>
        <taxon>Pseudomonadota</taxon>
        <taxon>Gammaproteobacteria</taxon>
        <taxon>Alteromonadales</taxon>
        <taxon>Shewanellaceae</taxon>
        <taxon>Shewanella</taxon>
    </lineage>
</organism>
<protein>
    <recommendedName>
        <fullName evidence="1">N-succinylarginine dihydrolase</fullName>
        <ecNumber evidence="1">3.5.3.23</ecNumber>
    </recommendedName>
</protein>
<reference key="1">
    <citation type="journal article" date="2002" name="Nat. Biotechnol.">
        <title>Genome sequence of the dissimilatory metal ion-reducing bacterium Shewanella oneidensis.</title>
        <authorList>
            <person name="Heidelberg J.F."/>
            <person name="Paulsen I.T."/>
            <person name="Nelson K.E."/>
            <person name="Gaidos E.J."/>
            <person name="Nelson W.C."/>
            <person name="Read T.D."/>
            <person name="Eisen J.A."/>
            <person name="Seshadri R."/>
            <person name="Ward N.L."/>
            <person name="Methe B.A."/>
            <person name="Clayton R.A."/>
            <person name="Meyer T."/>
            <person name="Tsapin A."/>
            <person name="Scott J."/>
            <person name="Beanan M.J."/>
            <person name="Brinkac L.M."/>
            <person name="Daugherty S.C."/>
            <person name="DeBoy R.T."/>
            <person name="Dodson R.J."/>
            <person name="Durkin A.S."/>
            <person name="Haft D.H."/>
            <person name="Kolonay J.F."/>
            <person name="Madupu R."/>
            <person name="Peterson J.D."/>
            <person name="Umayam L.A."/>
            <person name="White O."/>
            <person name="Wolf A.M."/>
            <person name="Vamathevan J.J."/>
            <person name="Weidman J.F."/>
            <person name="Impraim M."/>
            <person name="Lee K."/>
            <person name="Berry K.J."/>
            <person name="Lee C."/>
            <person name="Mueller J."/>
            <person name="Khouri H.M."/>
            <person name="Gill J."/>
            <person name="Utterback T.R."/>
            <person name="McDonald L.A."/>
            <person name="Feldblyum T.V."/>
            <person name="Smith H.O."/>
            <person name="Venter J.C."/>
            <person name="Nealson K.H."/>
            <person name="Fraser C.M."/>
        </authorList>
    </citation>
    <scope>NUCLEOTIDE SEQUENCE [LARGE SCALE GENOMIC DNA]</scope>
    <source>
        <strain>ATCC 700550 / JCM 31522 / CIP 106686 / LMG 19005 / NCIMB 14063 / MR-1</strain>
    </source>
</reference>
<name>ASTB_SHEON</name>
<sequence length="444" mass="49061">MKHFEANFDGLVGPTHNYAGLSFGNVASLNNAALVSNPKAAAKQGLQKAKALADLGMIQGMLAPQERPDLNTLRRIGFSGSDAQVLQQAAKTAPALLNACCSASSMWTANAATVSPSADTRDGKLHFTPANLVDKLHRSIEPITTGRILTATFNDPHYFYHHNHLPEHNSFGDEGAANHTRLCQEYGHAGVELFVYGQEATNPHAPKPLKFPARQTLEASMAIARLHQLEEDNCVFIQQNPAVIDQGVFHNDVIAVGNQNVLFYHEQAFLNTQAKLDEIKRKLDTELYFIEVPTAKVSINDAVKSYLFNTQIITLPSGEMAIIAPTDCQENPAVYAYLNELLSLNTPIKQVLYFDVKQSMQNGGGPACLRLRVAMNEREVAAVNQHTLLTDALFTRLNTWVEKHYRDRLSTEDLADPQLVIESRTALDELTQIMKLGSVYPFQR</sequence>
<accession>Q8EDN7</accession>
<proteinExistence type="inferred from homology"/>
<gene>
    <name evidence="1" type="primary">astB</name>
    <name type="ordered locus">SO_2706</name>
</gene>
<feature type="chain" id="PRO_0000262376" description="N-succinylarginine dihydrolase">
    <location>
        <begin position="1"/>
        <end position="444"/>
    </location>
</feature>
<feature type="active site" evidence="1">
    <location>
        <position position="174"/>
    </location>
</feature>
<feature type="active site" evidence="1">
    <location>
        <position position="250"/>
    </location>
</feature>
<feature type="active site" description="Nucleophile" evidence="1">
    <location>
        <position position="368"/>
    </location>
</feature>
<feature type="binding site" evidence="1">
    <location>
        <begin position="19"/>
        <end position="28"/>
    </location>
    <ligand>
        <name>substrate</name>
    </ligand>
</feature>
<feature type="binding site" evidence="1">
    <location>
        <position position="110"/>
    </location>
    <ligand>
        <name>substrate</name>
    </ligand>
</feature>
<feature type="binding site" evidence="1">
    <location>
        <begin position="137"/>
        <end position="138"/>
    </location>
    <ligand>
        <name>substrate</name>
    </ligand>
</feature>
<feature type="binding site" evidence="1">
    <location>
        <position position="214"/>
    </location>
    <ligand>
        <name>substrate</name>
    </ligand>
</feature>
<feature type="binding site" evidence="1">
    <location>
        <position position="252"/>
    </location>
    <ligand>
        <name>substrate</name>
    </ligand>
</feature>
<feature type="binding site" evidence="1">
    <location>
        <position position="362"/>
    </location>
    <ligand>
        <name>substrate</name>
    </ligand>
</feature>
<dbReference type="EC" id="3.5.3.23" evidence="1"/>
<dbReference type="EMBL" id="AE014299">
    <property type="protein sequence ID" value="AAN55734.1"/>
    <property type="molecule type" value="Genomic_DNA"/>
</dbReference>
<dbReference type="RefSeq" id="NP_718290.1">
    <property type="nucleotide sequence ID" value="NC_004347.2"/>
</dbReference>
<dbReference type="RefSeq" id="WP_011072652.1">
    <property type="nucleotide sequence ID" value="NC_004347.2"/>
</dbReference>
<dbReference type="SMR" id="Q8EDN7"/>
<dbReference type="STRING" id="211586.SO_2706"/>
<dbReference type="PaxDb" id="211586-SO_2706"/>
<dbReference type="KEGG" id="son:SO_2706"/>
<dbReference type="PATRIC" id="fig|211586.12.peg.2607"/>
<dbReference type="eggNOG" id="COG3724">
    <property type="taxonomic scope" value="Bacteria"/>
</dbReference>
<dbReference type="HOGENOM" id="CLU_053835_0_0_6"/>
<dbReference type="OrthoDB" id="248552at2"/>
<dbReference type="PhylomeDB" id="Q8EDN7"/>
<dbReference type="BioCyc" id="SONE211586:G1GMP-2490-MONOMER"/>
<dbReference type="UniPathway" id="UPA00185">
    <property type="reaction ID" value="UER00280"/>
</dbReference>
<dbReference type="Proteomes" id="UP000008186">
    <property type="component" value="Chromosome"/>
</dbReference>
<dbReference type="GO" id="GO:0009015">
    <property type="term" value="F:N-succinylarginine dihydrolase activity"/>
    <property type="evidence" value="ECO:0000318"/>
    <property type="project" value="GO_Central"/>
</dbReference>
<dbReference type="GO" id="GO:0006527">
    <property type="term" value="P:arginine catabolic process"/>
    <property type="evidence" value="ECO:0000318"/>
    <property type="project" value="GO_Central"/>
</dbReference>
<dbReference type="GO" id="GO:0019544">
    <property type="term" value="P:arginine catabolic process to glutamate"/>
    <property type="evidence" value="ECO:0007669"/>
    <property type="project" value="UniProtKB-UniRule"/>
</dbReference>
<dbReference type="GO" id="GO:0019545">
    <property type="term" value="P:arginine catabolic process to succinate"/>
    <property type="evidence" value="ECO:0007669"/>
    <property type="project" value="UniProtKB-UniRule"/>
</dbReference>
<dbReference type="Gene3D" id="3.75.10.20">
    <property type="entry name" value="Succinylarginine dihydrolase"/>
    <property type="match status" value="1"/>
</dbReference>
<dbReference type="HAMAP" id="MF_01172">
    <property type="entry name" value="AstB"/>
    <property type="match status" value="1"/>
</dbReference>
<dbReference type="InterPro" id="IPR037031">
    <property type="entry name" value="AstB_sf"/>
</dbReference>
<dbReference type="InterPro" id="IPR007079">
    <property type="entry name" value="SuccinylArg_d-Hdrlase_AstB"/>
</dbReference>
<dbReference type="NCBIfam" id="TIGR03241">
    <property type="entry name" value="arg_catab_astB"/>
    <property type="match status" value="1"/>
</dbReference>
<dbReference type="NCBIfam" id="NF009789">
    <property type="entry name" value="PRK13281.1"/>
    <property type="match status" value="1"/>
</dbReference>
<dbReference type="PANTHER" id="PTHR30420">
    <property type="entry name" value="N-SUCCINYLARGININE DIHYDROLASE"/>
    <property type="match status" value="1"/>
</dbReference>
<dbReference type="PANTHER" id="PTHR30420:SF2">
    <property type="entry name" value="N-SUCCINYLARGININE DIHYDROLASE"/>
    <property type="match status" value="1"/>
</dbReference>
<dbReference type="Pfam" id="PF04996">
    <property type="entry name" value="AstB"/>
    <property type="match status" value="1"/>
</dbReference>
<dbReference type="SUPFAM" id="SSF55909">
    <property type="entry name" value="Pentein"/>
    <property type="match status" value="1"/>
</dbReference>
<keyword id="KW-0056">Arginine metabolism</keyword>
<keyword id="KW-0378">Hydrolase</keyword>
<keyword id="KW-1185">Reference proteome</keyword>
<evidence type="ECO:0000255" key="1">
    <source>
        <dbReference type="HAMAP-Rule" id="MF_01172"/>
    </source>
</evidence>
<comment type="function">
    <text evidence="1">Catalyzes the hydrolysis of N(2)-succinylarginine into N(2)-succinylornithine, ammonia and CO(2).</text>
</comment>
<comment type="catalytic activity">
    <reaction evidence="1">
        <text>N(2)-succinyl-L-arginine + 2 H2O + 2 H(+) = N(2)-succinyl-L-ornithine + 2 NH4(+) + CO2</text>
        <dbReference type="Rhea" id="RHEA:19533"/>
        <dbReference type="ChEBI" id="CHEBI:15377"/>
        <dbReference type="ChEBI" id="CHEBI:15378"/>
        <dbReference type="ChEBI" id="CHEBI:16526"/>
        <dbReference type="ChEBI" id="CHEBI:28938"/>
        <dbReference type="ChEBI" id="CHEBI:58241"/>
        <dbReference type="ChEBI" id="CHEBI:58514"/>
        <dbReference type="EC" id="3.5.3.23"/>
    </reaction>
</comment>
<comment type="pathway">
    <text evidence="1">Amino-acid degradation; L-arginine degradation via AST pathway; L-glutamate and succinate from L-arginine: step 2/5.</text>
</comment>
<comment type="subunit">
    <text evidence="1">Homodimer.</text>
</comment>
<comment type="similarity">
    <text evidence="1">Belongs to the succinylarginine dihydrolase family.</text>
</comment>